<accession>Q8GX93</accession>
<accession>O65486</accession>
<accession>Q93XN4</accession>
<accession>Q9SVX1</accession>
<name>CLCE_ARATH</name>
<organism>
    <name type="scientific">Arabidopsis thaliana</name>
    <name type="common">Mouse-ear cress</name>
    <dbReference type="NCBI Taxonomy" id="3702"/>
    <lineage>
        <taxon>Eukaryota</taxon>
        <taxon>Viridiplantae</taxon>
        <taxon>Streptophyta</taxon>
        <taxon>Embryophyta</taxon>
        <taxon>Tracheophyta</taxon>
        <taxon>Spermatophyta</taxon>
        <taxon>Magnoliopsida</taxon>
        <taxon>eudicotyledons</taxon>
        <taxon>Gunneridae</taxon>
        <taxon>Pentapetalae</taxon>
        <taxon>rosids</taxon>
        <taxon>malvids</taxon>
        <taxon>Brassicales</taxon>
        <taxon>Brassicaceae</taxon>
        <taxon>Camelineae</taxon>
        <taxon>Arabidopsis</taxon>
    </lineage>
</organism>
<reference key="1">
    <citation type="submission" date="2001-03" db="EMBL/GenBank/DDBJ databases">
        <title>Molecular and functional characterization of AtCLC-e, a new putative Arabidopsis anion channel.</title>
        <authorList>
            <person name="Vinauger-Douard M."/>
            <person name="Charon C."/>
            <person name="Lapous D."/>
            <person name="Allot M."/>
            <person name="Granier F."/>
            <person name="Bouchez D."/>
            <person name="Barbier-Brygoo H."/>
            <person name="Ephritikhine G."/>
        </authorList>
    </citation>
    <scope>NUCLEOTIDE SEQUENCE [MRNA]</scope>
    <source>
        <strain>cv. Columbia</strain>
        <tissue>Aerial part</tissue>
    </source>
</reference>
<reference key="2">
    <citation type="journal article" date="1999" name="Nature">
        <title>Sequence and analysis of chromosome 4 of the plant Arabidopsis thaliana.</title>
        <authorList>
            <person name="Mayer K.F.X."/>
            <person name="Schueller C."/>
            <person name="Wambutt R."/>
            <person name="Murphy G."/>
            <person name="Volckaert G."/>
            <person name="Pohl T."/>
            <person name="Duesterhoeft A."/>
            <person name="Stiekema W."/>
            <person name="Entian K.-D."/>
            <person name="Terryn N."/>
            <person name="Harris B."/>
            <person name="Ansorge W."/>
            <person name="Brandt P."/>
            <person name="Grivell L.A."/>
            <person name="Rieger M."/>
            <person name="Weichselgartner M."/>
            <person name="de Simone V."/>
            <person name="Obermaier B."/>
            <person name="Mache R."/>
            <person name="Mueller M."/>
            <person name="Kreis M."/>
            <person name="Delseny M."/>
            <person name="Puigdomenech P."/>
            <person name="Watson M."/>
            <person name="Schmidtheini T."/>
            <person name="Reichert B."/>
            <person name="Portetelle D."/>
            <person name="Perez-Alonso M."/>
            <person name="Boutry M."/>
            <person name="Bancroft I."/>
            <person name="Vos P."/>
            <person name="Hoheisel J."/>
            <person name="Zimmermann W."/>
            <person name="Wedler H."/>
            <person name="Ridley P."/>
            <person name="Langham S.-A."/>
            <person name="McCullagh B."/>
            <person name="Bilham L."/>
            <person name="Robben J."/>
            <person name="van der Schueren J."/>
            <person name="Grymonprez B."/>
            <person name="Chuang Y.-J."/>
            <person name="Vandenbussche F."/>
            <person name="Braeken M."/>
            <person name="Weltjens I."/>
            <person name="Voet M."/>
            <person name="Bastiaens I."/>
            <person name="Aert R."/>
            <person name="Defoor E."/>
            <person name="Weitzenegger T."/>
            <person name="Bothe G."/>
            <person name="Ramsperger U."/>
            <person name="Hilbert H."/>
            <person name="Braun M."/>
            <person name="Holzer E."/>
            <person name="Brandt A."/>
            <person name="Peters S."/>
            <person name="van Staveren M."/>
            <person name="Dirkse W."/>
            <person name="Mooijman P."/>
            <person name="Klein Lankhorst R."/>
            <person name="Rose M."/>
            <person name="Hauf J."/>
            <person name="Koetter P."/>
            <person name="Berneiser S."/>
            <person name="Hempel S."/>
            <person name="Feldpausch M."/>
            <person name="Lamberth S."/>
            <person name="Van den Daele H."/>
            <person name="De Keyser A."/>
            <person name="Buysshaert C."/>
            <person name="Gielen J."/>
            <person name="Villarroel R."/>
            <person name="De Clercq R."/>
            <person name="van Montagu M."/>
            <person name="Rogers J."/>
            <person name="Cronin A."/>
            <person name="Quail M.A."/>
            <person name="Bray-Allen S."/>
            <person name="Clark L."/>
            <person name="Doggett J."/>
            <person name="Hall S."/>
            <person name="Kay M."/>
            <person name="Lennard N."/>
            <person name="McLay K."/>
            <person name="Mayes R."/>
            <person name="Pettett A."/>
            <person name="Rajandream M.A."/>
            <person name="Lyne M."/>
            <person name="Benes V."/>
            <person name="Rechmann S."/>
            <person name="Borkova D."/>
            <person name="Bloecker H."/>
            <person name="Scharfe M."/>
            <person name="Grimm M."/>
            <person name="Loehnert T.-H."/>
            <person name="Dose S."/>
            <person name="de Haan M."/>
            <person name="Maarse A.C."/>
            <person name="Schaefer M."/>
            <person name="Mueller-Auer S."/>
            <person name="Gabel C."/>
            <person name="Fuchs M."/>
            <person name="Fartmann B."/>
            <person name="Granderath K."/>
            <person name="Dauner D."/>
            <person name="Herzl A."/>
            <person name="Neumann S."/>
            <person name="Argiriou A."/>
            <person name="Vitale D."/>
            <person name="Liguori R."/>
            <person name="Piravandi E."/>
            <person name="Massenet O."/>
            <person name="Quigley F."/>
            <person name="Clabauld G."/>
            <person name="Muendlein A."/>
            <person name="Felber R."/>
            <person name="Schnabl S."/>
            <person name="Hiller R."/>
            <person name="Schmidt W."/>
            <person name="Lecharny A."/>
            <person name="Aubourg S."/>
            <person name="Chefdor F."/>
            <person name="Cooke R."/>
            <person name="Berger C."/>
            <person name="Monfort A."/>
            <person name="Casacuberta E."/>
            <person name="Gibbons T."/>
            <person name="Weber N."/>
            <person name="Vandenbol M."/>
            <person name="Bargues M."/>
            <person name="Terol J."/>
            <person name="Torres A."/>
            <person name="Perez-Perez A."/>
            <person name="Purnelle B."/>
            <person name="Bent E."/>
            <person name="Johnson S."/>
            <person name="Tacon D."/>
            <person name="Jesse T."/>
            <person name="Heijnen L."/>
            <person name="Schwarz S."/>
            <person name="Scholler P."/>
            <person name="Heber S."/>
            <person name="Francs P."/>
            <person name="Bielke C."/>
            <person name="Frishman D."/>
            <person name="Haase D."/>
            <person name="Lemcke K."/>
            <person name="Mewes H.-W."/>
            <person name="Stocker S."/>
            <person name="Zaccaria P."/>
            <person name="Bevan M."/>
            <person name="Wilson R.K."/>
            <person name="de la Bastide M."/>
            <person name="Habermann K."/>
            <person name="Parnell L."/>
            <person name="Dedhia N."/>
            <person name="Gnoj L."/>
            <person name="Schutz K."/>
            <person name="Huang E."/>
            <person name="Spiegel L."/>
            <person name="Sekhon M."/>
            <person name="Murray J."/>
            <person name="Sheet P."/>
            <person name="Cordes M."/>
            <person name="Abu-Threideh J."/>
            <person name="Stoneking T."/>
            <person name="Kalicki J."/>
            <person name="Graves T."/>
            <person name="Harmon G."/>
            <person name="Edwards J."/>
            <person name="Latreille P."/>
            <person name="Courtney L."/>
            <person name="Cloud J."/>
            <person name="Abbott A."/>
            <person name="Scott K."/>
            <person name="Johnson D."/>
            <person name="Minx P."/>
            <person name="Bentley D."/>
            <person name="Fulton B."/>
            <person name="Miller N."/>
            <person name="Greco T."/>
            <person name="Kemp K."/>
            <person name="Kramer J."/>
            <person name="Fulton L."/>
            <person name="Mardis E."/>
            <person name="Dante M."/>
            <person name="Pepin K."/>
            <person name="Hillier L.W."/>
            <person name="Nelson J."/>
            <person name="Spieth J."/>
            <person name="Ryan E."/>
            <person name="Andrews S."/>
            <person name="Geisel C."/>
            <person name="Layman D."/>
            <person name="Du H."/>
            <person name="Ali J."/>
            <person name="Berghoff A."/>
            <person name="Jones K."/>
            <person name="Drone K."/>
            <person name="Cotton M."/>
            <person name="Joshu C."/>
            <person name="Antonoiu B."/>
            <person name="Zidanic M."/>
            <person name="Strong C."/>
            <person name="Sun H."/>
            <person name="Lamar B."/>
            <person name="Yordan C."/>
            <person name="Ma P."/>
            <person name="Zhong J."/>
            <person name="Preston R."/>
            <person name="Vil D."/>
            <person name="Shekher M."/>
            <person name="Matero A."/>
            <person name="Shah R."/>
            <person name="Swaby I.K."/>
            <person name="O'Shaughnessy A."/>
            <person name="Rodriguez M."/>
            <person name="Hoffman J."/>
            <person name="Till S."/>
            <person name="Granat S."/>
            <person name="Shohdy N."/>
            <person name="Hasegawa A."/>
            <person name="Hameed A."/>
            <person name="Lodhi M."/>
            <person name="Johnson A."/>
            <person name="Chen E."/>
            <person name="Marra M.A."/>
            <person name="Martienssen R."/>
            <person name="McCombie W.R."/>
        </authorList>
    </citation>
    <scope>NUCLEOTIDE SEQUENCE [LARGE SCALE GENOMIC DNA]</scope>
    <source>
        <strain>cv. Columbia</strain>
    </source>
</reference>
<reference key="3">
    <citation type="journal article" date="2017" name="Plant J.">
        <title>Araport11: a complete reannotation of the Arabidopsis thaliana reference genome.</title>
        <authorList>
            <person name="Cheng C.Y."/>
            <person name="Krishnakumar V."/>
            <person name="Chan A.P."/>
            <person name="Thibaud-Nissen F."/>
            <person name="Schobel S."/>
            <person name="Town C.D."/>
        </authorList>
    </citation>
    <scope>GENOME REANNOTATION</scope>
    <source>
        <strain>cv. Columbia</strain>
    </source>
</reference>
<reference key="4">
    <citation type="journal article" date="2002" name="Science">
        <title>Functional annotation of a full-length Arabidopsis cDNA collection.</title>
        <authorList>
            <person name="Seki M."/>
            <person name="Narusaka M."/>
            <person name="Kamiya A."/>
            <person name="Ishida J."/>
            <person name="Satou M."/>
            <person name="Sakurai T."/>
            <person name="Nakajima M."/>
            <person name="Enju A."/>
            <person name="Akiyama K."/>
            <person name="Oono Y."/>
            <person name="Muramatsu M."/>
            <person name="Hayashizaki Y."/>
            <person name="Kawai J."/>
            <person name="Carninci P."/>
            <person name="Itoh M."/>
            <person name="Ishii Y."/>
            <person name="Arakawa T."/>
            <person name="Shibata K."/>
            <person name="Shinagawa A."/>
            <person name="Shinozaki K."/>
        </authorList>
    </citation>
    <scope>NUCLEOTIDE SEQUENCE [LARGE SCALE MRNA]</scope>
    <source>
        <strain>cv. Columbia</strain>
    </source>
</reference>
<reference key="5">
    <citation type="journal article" date="2009" name="BMC Genomics">
        <title>Genome wide expression analysis of CBS domain containing proteins in Arabidopsis thaliana (L.) Heynh and Oryza sativa L. reveals their developmental and stress regulation.</title>
        <authorList>
            <person name="Kushwaha H.R."/>
            <person name="Singh A.K."/>
            <person name="Sopory S.K."/>
            <person name="Singla-Pareek S.L."/>
            <person name="Pareek A."/>
        </authorList>
    </citation>
    <scope>GENE FAMILY</scope>
    <scope>NOMENCLATURE</scope>
</reference>
<reference key="6">
    <citation type="journal article" date="2016" name="Front. Plant Sci.">
        <title>The Arabidopsis thylakoid chloride channel AtCLCe functions in chloride homeostasis and regulation of photosynthetic electron transport.</title>
        <authorList>
            <person name="Herdean A."/>
            <person name="Nziengui H."/>
            <person name="Zsiros O."/>
            <person name="Solymosi K."/>
            <person name="Garab G."/>
            <person name="Lundin B."/>
            <person name="Spetea C."/>
        </authorList>
    </citation>
    <scope>FUNCTION</scope>
    <scope>DISRUPTION PHENOTYPE</scope>
    <source>
        <strain>cv. Columbia</strain>
    </source>
</reference>
<reference key="7">
    <citation type="journal article" date="2019" name="Sci. Rep.">
        <title>K+ and Cl- channels/transporters independently fine-tune photosynthesis in plants.</title>
        <authorList>
            <person name="Dukic E."/>
            <person name="Herdean A."/>
            <person name="Cheregi O."/>
            <person name="Sharma A."/>
            <person name="Nziengui H."/>
            <person name="Dmitruk D."/>
            <person name="Solymosi K."/>
            <person name="Pribil M."/>
            <person name="Spetea C."/>
        </authorList>
    </citation>
    <scope>FUNCTION</scope>
    <scope>DISRUPTION PHENOTYPE</scope>
    <source>
        <strain>cv. Columbia</strain>
    </source>
</reference>
<dbReference type="EMBL" id="AF366367">
    <property type="protein sequence ID" value="AAK53390.1"/>
    <property type="molecule type" value="mRNA"/>
</dbReference>
<dbReference type="EMBL" id="AL022604">
    <property type="protein sequence ID" value="CAA18726.1"/>
    <property type="status" value="ALT_SEQ"/>
    <property type="molecule type" value="Genomic_DNA"/>
</dbReference>
<dbReference type="EMBL" id="AL117188">
    <property type="protein sequence ID" value="CAB54872.1"/>
    <property type="status" value="ALT_SEQ"/>
    <property type="molecule type" value="Genomic_DNA"/>
</dbReference>
<dbReference type="EMBL" id="AL161587">
    <property type="protein sequence ID" value="CAB80260.1"/>
    <property type="status" value="ALT_SEQ"/>
    <property type="molecule type" value="Genomic_DNA"/>
</dbReference>
<dbReference type="EMBL" id="CP002687">
    <property type="protein sequence ID" value="AEE86510.1"/>
    <property type="molecule type" value="Genomic_DNA"/>
</dbReference>
<dbReference type="EMBL" id="AK118357">
    <property type="protein sequence ID" value="BAC42971.1"/>
    <property type="status" value="ALT_FRAME"/>
    <property type="molecule type" value="mRNA"/>
</dbReference>
<dbReference type="PIR" id="T17122">
    <property type="entry name" value="T17122"/>
</dbReference>
<dbReference type="RefSeq" id="NP_567985.1">
    <molecule id="Q8GX93-1"/>
    <property type="nucleotide sequence ID" value="NM_119709.1"/>
</dbReference>
<dbReference type="SMR" id="Q8GX93"/>
<dbReference type="FunCoup" id="Q8GX93">
    <property type="interactions" value="406"/>
</dbReference>
<dbReference type="STRING" id="3702.Q8GX93"/>
<dbReference type="TCDB" id="2.A.49.6.3">
    <property type="family name" value="the chloride carrier/channel (clc) family"/>
</dbReference>
<dbReference type="PaxDb" id="3702-AT4G35440.2"/>
<dbReference type="ProteomicsDB" id="240976">
    <molecule id="Q8GX93-1"/>
</dbReference>
<dbReference type="EnsemblPlants" id="AT4G35440.1">
    <molecule id="Q8GX93-1"/>
    <property type="protein sequence ID" value="AT4G35440.1"/>
    <property type="gene ID" value="AT4G35440"/>
</dbReference>
<dbReference type="GeneID" id="829696"/>
<dbReference type="Gramene" id="AT4G35440.1">
    <molecule id="Q8GX93-1"/>
    <property type="protein sequence ID" value="AT4G35440.1"/>
    <property type="gene ID" value="AT4G35440"/>
</dbReference>
<dbReference type="KEGG" id="ath:AT4G35440"/>
<dbReference type="Araport" id="AT4G35440"/>
<dbReference type="TAIR" id="AT4G35440">
    <property type="gene designation" value="CLC-E"/>
</dbReference>
<dbReference type="eggNOG" id="KOG0475">
    <property type="taxonomic scope" value="Eukaryota"/>
</dbReference>
<dbReference type="HOGENOM" id="CLU_015263_3_0_1"/>
<dbReference type="InParanoid" id="Q8GX93"/>
<dbReference type="OMA" id="CTALSME"/>
<dbReference type="PhylomeDB" id="Q8GX93"/>
<dbReference type="PRO" id="PR:Q8GX93"/>
<dbReference type="Proteomes" id="UP000006548">
    <property type="component" value="Chromosome 4"/>
</dbReference>
<dbReference type="ExpressionAtlas" id="Q8GX93">
    <property type="expression patterns" value="baseline and differential"/>
</dbReference>
<dbReference type="GO" id="GO:0034707">
    <property type="term" value="C:chloride channel complex"/>
    <property type="evidence" value="ECO:0007669"/>
    <property type="project" value="UniProtKB-KW"/>
</dbReference>
<dbReference type="GO" id="GO:0005254">
    <property type="term" value="F:chloride channel activity"/>
    <property type="evidence" value="ECO:0007669"/>
    <property type="project" value="UniProtKB-KW"/>
</dbReference>
<dbReference type="GO" id="GO:1902476">
    <property type="term" value="P:chloride transmembrane transport"/>
    <property type="evidence" value="ECO:0000315"/>
    <property type="project" value="UniProtKB"/>
</dbReference>
<dbReference type="GO" id="GO:0042548">
    <property type="term" value="P:regulation of photosynthesis, light reaction"/>
    <property type="evidence" value="ECO:0000315"/>
    <property type="project" value="UniProtKB"/>
</dbReference>
<dbReference type="GO" id="GO:0010027">
    <property type="term" value="P:thylakoid membrane organization"/>
    <property type="evidence" value="ECO:0000315"/>
    <property type="project" value="UniProtKB"/>
</dbReference>
<dbReference type="CDD" id="cd04592">
    <property type="entry name" value="CBS_pair_voltage-gated_CLC_euk_bac"/>
    <property type="match status" value="1"/>
</dbReference>
<dbReference type="CDD" id="cd00400">
    <property type="entry name" value="Voltage_gated_ClC"/>
    <property type="match status" value="1"/>
</dbReference>
<dbReference type="FunFam" id="1.10.3080.10:FF:000008">
    <property type="entry name" value="Chloride channel protein"/>
    <property type="match status" value="1"/>
</dbReference>
<dbReference type="FunFam" id="3.10.580.10:FF:000066">
    <property type="entry name" value="Chloride channel protein"/>
    <property type="match status" value="1"/>
</dbReference>
<dbReference type="Gene3D" id="3.10.580.10">
    <property type="entry name" value="CBS-domain"/>
    <property type="match status" value="1"/>
</dbReference>
<dbReference type="Gene3D" id="1.10.3080.10">
    <property type="entry name" value="Clc chloride channel"/>
    <property type="match status" value="1"/>
</dbReference>
<dbReference type="InterPro" id="IPR000644">
    <property type="entry name" value="CBS_dom"/>
</dbReference>
<dbReference type="InterPro" id="IPR046342">
    <property type="entry name" value="CBS_dom_sf"/>
</dbReference>
<dbReference type="InterPro" id="IPR014743">
    <property type="entry name" value="Cl-channel_core"/>
</dbReference>
<dbReference type="InterPro" id="IPR001807">
    <property type="entry name" value="ClC"/>
</dbReference>
<dbReference type="InterPro" id="IPR050368">
    <property type="entry name" value="ClC-type_chloride_channel"/>
</dbReference>
<dbReference type="PANTHER" id="PTHR43427">
    <property type="entry name" value="CHLORIDE CHANNEL PROTEIN CLC-E"/>
    <property type="match status" value="1"/>
</dbReference>
<dbReference type="PANTHER" id="PTHR43427:SF6">
    <property type="entry name" value="CHLORIDE CHANNEL PROTEIN CLC-E"/>
    <property type="match status" value="1"/>
</dbReference>
<dbReference type="Pfam" id="PF00571">
    <property type="entry name" value="CBS"/>
    <property type="match status" value="1"/>
</dbReference>
<dbReference type="Pfam" id="PF00654">
    <property type="entry name" value="Voltage_CLC"/>
    <property type="match status" value="1"/>
</dbReference>
<dbReference type="PRINTS" id="PR00762">
    <property type="entry name" value="CLCHANNEL"/>
</dbReference>
<dbReference type="SMART" id="SM00116">
    <property type="entry name" value="CBS"/>
    <property type="match status" value="2"/>
</dbReference>
<dbReference type="SUPFAM" id="SSF54631">
    <property type="entry name" value="CBS-domain pair"/>
    <property type="match status" value="1"/>
</dbReference>
<dbReference type="SUPFAM" id="SSF81340">
    <property type="entry name" value="Clc chloride channel"/>
    <property type="match status" value="1"/>
</dbReference>
<dbReference type="PROSITE" id="PS51371">
    <property type="entry name" value="CBS"/>
    <property type="match status" value="2"/>
</dbReference>
<sequence>MAATLPLCAALRSPVSSRRFAPIHKTDVPFQFNVVLSPFFGSVAIGGRIFPRLPAAKQETDQDEVGFDQQPSQELAIASACLVGVLTGVSVVLFNNCVHLLRDFSWDGIPDRGASWLREAPIGSNWLRVILVPTIGGLVVSILNQLRESAGKSTGDSHSSLDRVKAVLRPFLKTVAACVTLGTGNSLGPEGPSVEIGASIAKGVNSLFNKSPQTGFSLLAAGSAAGISSGFNAAVAGCFFAVESVLWPSSSTDSSTSLPNTTSMVILSAVTASVVSEIGLGSEPAFKVPDYDFRSPGELPLYLLLGALCGLVSLALSRCTSSMTSAVDSLNKDAGIPKAVFPVMGGLSVGIIALVYPEVLYWGFQNVDILLEKRPFVKGLSADLLLQLVAVKIAATAWCRASGLVGGYYAPSLFIGGAAGMAYGKFIGLALAQNPDFNLSILEVASPQAYGLVGMAATLAGVCQVPLTAVLLLFELTQDYRIVLPLLGAVGMSSWITSGQSKRQETRETKETRKRKSQEAVQSLTSSDDESSTNNLCEVESSLCLDDSLNQSEELPKSIFVSEAMRTRFATVMMSTSLEEALTRMLIEKQSCALIVDPDNIFLGILTLSDIQEFSKARKEGNNRPKDIFVNDICSRSGGKCKVPWTVTPDMDLLAAQTIMNKHELSHVAVVSGSIDAPRIHPVGVLDRECITLTRRALATRMYLLNSLYL</sequence>
<comment type="function">
    <text evidence="5 6">Voltage-gated thylakoid chloride (Cl) channel/transporter involved in chloride homeostasis after transition from light to dark (PubMed:26904077). Influences chloroplast ultrastructure and subsequent photosynthetic electron transport (PubMed:26904077). During photosynthetic response on transition from dark to low light, involved in a sequential mechanism of adaptation; VCCN1 and CLCe first trigger the activation of photoprotection, which is later down-regulated by KEA3 to a low steady state, while adjusting electron transport (PubMed:31201341). Regulates photosynthesis by a pH-independent mechanism likely involving Cl(-) homeostasis (PubMed:31201341).</text>
</comment>
<comment type="catalytic activity">
    <reaction evidence="1">
        <text>2 chloride(in) + H(+)(out) = 2 chloride(out) + H(+)(in)</text>
        <dbReference type="Rhea" id="RHEA:29567"/>
        <dbReference type="ChEBI" id="CHEBI:15378"/>
        <dbReference type="ChEBI" id="CHEBI:17996"/>
    </reaction>
</comment>
<comment type="subunit">
    <text evidence="1">Homodimer.</text>
</comment>
<comment type="subcellular location">
    <subcellularLocation>
        <location evidence="2">Membrane</location>
        <topology evidence="2">Multi-pass membrane protein</topology>
    </subcellularLocation>
</comment>
<comment type="alternative products">
    <event type="alternative splicing"/>
    <isoform>
        <id>Q8GX93-1</id>
        <name>1</name>
        <sequence type="displayed"/>
    </isoform>
    <text>A number of isoforms are produced. According to EST sequences.</text>
</comment>
<comment type="disruption phenotype">
    <text evidence="5 6">No visible phenotype except reduced nitrate content and disturbed chloride Cl(-) homeostasis (PubMed:26904077, PubMed:31201341). Lower photosynthetic performance in dark-adapted plants, associated with abnormal shape and associated parameters of the polyphasic OJIP kinetics of chlorophyll a fluorescence induction (PubMed:26904077, PubMed:31201341). Mildly altered size and composition of proton motive force (PMF) (PubMed:26904077). Altered kinetics of state transition and in the macro-organization of photosystem II supercomplexes; phenotypes reversed by potassium chloride (KCl) (PubMed:26904077). Bow-like arrangement of the thylakoid network and large thylakoid-free stromal region in chloroplast from dark-adapted plants (PubMed:26904077). Transiently decreased non-photochemical quenching (NPQ) upon transition from dark to low light (PubMed:31201341). Lower photosynthetic performance and altered NPQ upon transition from dark to low light in clce kea3 and clce vccn1 double mutants, as well as in the clce kea3 vccn1 triple mutant (PubMed:31201341).</text>
</comment>
<comment type="similarity">
    <text evidence="10">Belongs to the chloride channel (TC 2.A.49) family.</text>
</comment>
<comment type="sequence caution" evidence="10">
    <conflict type="frameshift">
        <sequence resource="EMBL-CDS" id="BAC42971"/>
    </conflict>
</comment>
<comment type="sequence caution" evidence="10">
    <conflict type="erroneous gene model prediction">
        <sequence resource="EMBL-CDS" id="CAA18726"/>
    </conflict>
</comment>
<comment type="sequence caution" evidence="10">
    <conflict type="erroneous gene model prediction">
        <sequence resource="EMBL-CDS" id="CAB54872"/>
    </conflict>
</comment>
<comment type="sequence caution" evidence="10">
    <conflict type="erroneous gene model prediction">
        <sequence resource="EMBL-CDS" id="CAB80260"/>
    </conflict>
</comment>
<proteinExistence type="evidence at transcript level"/>
<feature type="chain" id="PRO_0000094469" description="Chloride channel protein CLC-e">
    <location>
        <begin position="1"/>
        <end position="710"/>
    </location>
</feature>
<feature type="transmembrane region" description="Helical; Name=1" evidence="2">
    <location>
        <begin position="74"/>
        <end position="94"/>
    </location>
</feature>
<feature type="transmembrane region" description="Helical; Name=2" evidence="2">
    <location>
        <begin position="122"/>
        <end position="142"/>
    </location>
</feature>
<feature type="transmembrane region" description="Helical; Name=3" evidence="2">
    <location>
        <begin position="164"/>
        <end position="184"/>
    </location>
</feature>
<feature type="transmembrane region" description="Helical; Name=4" evidence="2">
    <location>
        <begin position="193"/>
        <end position="213"/>
    </location>
</feature>
<feature type="transmembrane region" description="Helical; Name=5" evidence="2">
    <location>
        <begin position="222"/>
        <end position="242"/>
    </location>
</feature>
<feature type="transmembrane region" description="Helical; Name=6" evidence="2">
    <location>
        <begin position="261"/>
        <end position="281"/>
    </location>
</feature>
<feature type="transmembrane region" description="Helical; Name=7" evidence="2">
    <location>
        <begin position="296"/>
        <end position="316"/>
    </location>
</feature>
<feature type="transmembrane region" description="Helical; Name=8" evidence="2">
    <location>
        <begin position="340"/>
        <end position="360"/>
    </location>
</feature>
<feature type="transmembrane region" description="Helical; Name=9" evidence="2">
    <location>
        <begin position="379"/>
        <end position="399"/>
    </location>
</feature>
<feature type="transmembrane region" description="Helical; Name=10" evidence="2">
    <location>
        <begin position="412"/>
        <end position="432"/>
    </location>
</feature>
<feature type="transmembrane region" description="Helical; Name=11" evidence="2">
    <location>
        <begin position="451"/>
        <end position="471"/>
    </location>
</feature>
<feature type="transmembrane region" description="Helical; Name=12" evidence="2">
    <location>
        <begin position="472"/>
        <end position="492"/>
    </location>
</feature>
<feature type="transmembrane region" description="Helical; Name=13" evidence="2">
    <location>
        <begin position="667"/>
        <end position="687"/>
    </location>
</feature>
<feature type="domain" description="CBS 1" evidence="3">
    <location>
        <begin position="565"/>
        <end position="624"/>
    </location>
</feature>
<feature type="domain" description="CBS 2" evidence="3">
    <location>
        <begin position="640"/>
        <end position="702"/>
    </location>
</feature>
<feature type="region of interest" description="Disordered" evidence="4">
    <location>
        <begin position="500"/>
        <end position="534"/>
    </location>
</feature>
<feature type="compositionally biased region" description="Basic and acidic residues" evidence="4">
    <location>
        <begin position="502"/>
        <end position="511"/>
    </location>
</feature>
<feature type="compositionally biased region" description="Polar residues" evidence="4">
    <location>
        <begin position="520"/>
        <end position="534"/>
    </location>
</feature>
<feature type="sequence conflict" description="In Ref. 1; AAK53390." evidence="10" ref="1">
    <location>
        <position position="297"/>
    </location>
</feature>
<feature type="sequence conflict" description="In Ref. 1; AAK53390." evidence="10" ref="1">
    <location>
        <position position="453"/>
    </location>
</feature>
<gene>
    <name evidence="9" type="primary">CLC-E</name>
    <name evidence="7" type="synonym">CBSCLC3</name>
    <name evidence="11" type="ordered locus">At4g35440</name>
    <name evidence="13" type="ORF">F15J1.10</name>
    <name evidence="12" type="ORF">F23E12.10</name>
</gene>
<protein>
    <recommendedName>
        <fullName evidence="9">Chloride channel protein CLC-e</fullName>
        <shortName evidence="9">AtCLC-e</shortName>
        <shortName evidence="8">AtCLCe</shortName>
    </recommendedName>
    <alternativeName>
        <fullName evidence="7">CBS domain-containing protein CBSCLC3</fullName>
    </alternativeName>
</protein>
<keyword id="KW-0025">Alternative splicing</keyword>
<keyword id="KW-0129">CBS domain</keyword>
<keyword id="KW-0868">Chloride</keyword>
<keyword id="KW-0869">Chloride channel</keyword>
<keyword id="KW-0407">Ion channel</keyword>
<keyword id="KW-0406">Ion transport</keyword>
<keyword id="KW-0472">Membrane</keyword>
<keyword id="KW-1185">Reference proteome</keyword>
<keyword id="KW-0677">Repeat</keyword>
<keyword id="KW-0812">Transmembrane</keyword>
<keyword id="KW-1133">Transmembrane helix</keyword>
<keyword id="KW-0813">Transport</keyword>
<keyword id="KW-0851">Voltage-gated channel</keyword>
<evidence type="ECO:0000250" key="1">
    <source>
        <dbReference type="UniProtKB" id="P37019"/>
    </source>
</evidence>
<evidence type="ECO:0000255" key="2"/>
<evidence type="ECO:0000255" key="3">
    <source>
        <dbReference type="PROSITE-ProRule" id="PRU00703"/>
    </source>
</evidence>
<evidence type="ECO:0000256" key="4">
    <source>
        <dbReference type="SAM" id="MobiDB-lite"/>
    </source>
</evidence>
<evidence type="ECO:0000269" key="5">
    <source>
    </source>
</evidence>
<evidence type="ECO:0000269" key="6">
    <source>
    </source>
</evidence>
<evidence type="ECO:0000303" key="7">
    <source>
    </source>
</evidence>
<evidence type="ECO:0000303" key="8">
    <source>
    </source>
</evidence>
<evidence type="ECO:0000303" key="9">
    <source ref="1"/>
</evidence>
<evidence type="ECO:0000305" key="10"/>
<evidence type="ECO:0000312" key="11">
    <source>
        <dbReference type="Araport" id="AT4G35440"/>
    </source>
</evidence>
<evidence type="ECO:0000312" key="12">
    <source>
        <dbReference type="EMBL" id="CAA18726.1"/>
    </source>
</evidence>
<evidence type="ECO:0000312" key="13">
    <source>
        <dbReference type="EMBL" id="CAB54872.1"/>
    </source>
</evidence>